<reference key="1">
    <citation type="journal article" date="1997" name="Nature">
        <title>The nucleotide sequence of Saccharomyces cerevisiae chromosome XVI.</title>
        <authorList>
            <person name="Bussey H."/>
            <person name="Storms R.K."/>
            <person name="Ahmed A."/>
            <person name="Albermann K."/>
            <person name="Allen E."/>
            <person name="Ansorge W."/>
            <person name="Araujo R."/>
            <person name="Aparicio A."/>
            <person name="Barrell B.G."/>
            <person name="Badcock K."/>
            <person name="Benes V."/>
            <person name="Botstein D."/>
            <person name="Bowman S."/>
            <person name="Brueckner M."/>
            <person name="Carpenter J."/>
            <person name="Cherry J.M."/>
            <person name="Chung E."/>
            <person name="Churcher C.M."/>
            <person name="Coster F."/>
            <person name="Davis K."/>
            <person name="Davis R.W."/>
            <person name="Dietrich F.S."/>
            <person name="Delius H."/>
            <person name="DiPaolo T."/>
            <person name="Dubois E."/>
            <person name="Duesterhoeft A."/>
            <person name="Duncan M."/>
            <person name="Floeth M."/>
            <person name="Fortin N."/>
            <person name="Friesen J.D."/>
            <person name="Fritz C."/>
            <person name="Goffeau A."/>
            <person name="Hall J."/>
            <person name="Hebling U."/>
            <person name="Heumann K."/>
            <person name="Hilbert H."/>
            <person name="Hillier L.W."/>
            <person name="Hunicke-Smith S."/>
            <person name="Hyman R.W."/>
            <person name="Johnston M."/>
            <person name="Kalman S."/>
            <person name="Kleine K."/>
            <person name="Komp C."/>
            <person name="Kurdi O."/>
            <person name="Lashkari D."/>
            <person name="Lew H."/>
            <person name="Lin A."/>
            <person name="Lin D."/>
            <person name="Louis E.J."/>
            <person name="Marathe R."/>
            <person name="Messenguy F."/>
            <person name="Mewes H.-W."/>
            <person name="Mirtipati S."/>
            <person name="Moestl D."/>
            <person name="Mueller-Auer S."/>
            <person name="Namath A."/>
            <person name="Nentwich U."/>
            <person name="Oefner P."/>
            <person name="Pearson D."/>
            <person name="Petel F.X."/>
            <person name="Pohl T.M."/>
            <person name="Purnelle B."/>
            <person name="Rajandream M.A."/>
            <person name="Rechmann S."/>
            <person name="Rieger M."/>
            <person name="Riles L."/>
            <person name="Roberts D."/>
            <person name="Schaefer M."/>
            <person name="Scharfe M."/>
            <person name="Scherens B."/>
            <person name="Schramm S."/>
            <person name="Schroeder M."/>
            <person name="Sdicu A.-M."/>
            <person name="Tettelin H."/>
            <person name="Urrestarazu L.A."/>
            <person name="Ushinsky S."/>
            <person name="Vierendeels F."/>
            <person name="Vissers S."/>
            <person name="Voss H."/>
            <person name="Walsh S.V."/>
            <person name="Wambutt R."/>
            <person name="Wang Y."/>
            <person name="Wedler E."/>
            <person name="Wedler H."/>
            <person name="Winnett E."/>
            <person name="Zhong W.-W."/>
            <person name="Zollner A."/>
            <person name="Vo D.H."/>
            <person name="Hani J."/>
        </authorList>
    </citation>
    <scope>NUCLEOTIDE SEQUENCE [LARGE SCALE GENOMIC DNA]</scope>
    <source>
        <strain>ATCC 204508 / S288c</strain>
    </source>
</reference>
<reference key="2">
    <citation type="journal article" date="2014" name="G3 (Bethesda)">
        <title>The reference genome sequence of Saccharomyces cerevisiae: Then and now.</title>
        <authorList>
            <person name="Engel S.R."/>
            <person name="Dietrich F.S."/>
            <person name="Fisk D.G."/>
            <person name="Binkley G."/>
            <person name="Balakrishnan R."/>
            <person name="Costanzo M.C."/>
            <person name="Dwight S.S."/>
            <person name="Hitz B.C."/>
            <person name="Karra K."/>
            <person name="Nash R.S."/>
            <person name="Weng S."/>
            <person name="Wong E.D."/>
            <person name="Lloyd P."/>
            <person name="Skrzypek M.S."/>
            <person name="Miyasato S.R."/>
            <person name="Simison M."/>
            <person name="Cherry J.M."/>
        </authorList>
    </citation>
    <scope>GENOME REANNOTATION</scope>
    <source>
        <strain>ATCC 204508 / S288c</strain>
    </source>
</reference>
<reference key="3">
    <citation type="journal article" date="2007" name="FEMS Yeast Res.">
        <title>Specific transcriptional responses induced by 8-methoxypsoralen and UVA in yeast.</title>
        <authorList>
            <person name="Dardalhon M."/>
            <person name="Lin W."/>
            <person name="Nicolas A."/>
            <person name="Averbeck D."/>
        </authorList>
    </citation>
    <scope>INDUCTION</scope>
</reference>
<reference key="4">
    <citation type="journal article" date="2011" name="Genome Res.">
        <title>Selective ploidy ablation, a high-throughput plasmid transfer protocol, identifies new genes affecting topoisomerase I-induced DNA damage.</title>
        <authorList>
            <person name="Reid R.J."/>
            <person name="Gonzalez-Barrera S."/>
            <person name="Sunjevaric I."/>
            <person name="Alvaro D."/>
            <person name="Ciccone S."/>
            <person name="Wagner M."/>
            <person name="Rothstein R."/>
        </authorList>
    </citation>
    <scope>DISRUPTION PHENOTYPE</scope>
</reference>
<gene>
    <name type="primary">TDA6</name>
    <name type="ordered locus">YPR157W</name>
</gene>
<evidence type="ECO:0000250" key="1"/>
<evidence type="ECO:0000255" key="2"/>
<evidence type="ECO:0000269" key="3">
    <source>
    </source>
</evidence>
<evidence type="ECO:0000269" key="4">
    <source>
    </source>
</evidence>
<evidence type="ECO:0000305" key="5"/>
<dbReference type="EMBL" id="U28371">
    <property type="protein sequence ID" value="AAB68054.1"/>
    <property type="molecule type" value="Genomic_DNA"/>
</dbReference>
<dbReference type="EMBL" id="BK006949">
    <property type="protein sequence ID" value="DAA11569.1"/>
    <property type="molecule type" value="Genomic_DNA"/>
</dbReference>
<dbReference type="PIR" id="S61141">
    <property type="entry name" value="S61141"/>
</dbReference>
<dbReference type="RefSeq" id="NP_015483.1">
    <property type="nucleotide sequence ID" value="NM_001184254.1"/>
</dbReference>
<dbReference type="BioGRID" id="36324">
    <property type="interactions" value="43"/>
</dbReference>
<dbReference type="DIP" id="DIP-3824N"/>
<dbReference type="FunCoup" id="Q06466">
    <property type="interactions" value="46"/>
</dbReference>
<dbReference type="MINT" id="Q06466"/>
<dbReference type="STRING" id="4932.YPR157W"/>
<dbReference type="GlyCosmos" id="Q06466">
    <property type="glycosylation" value="3 sites, No reported glycans"/>
</dbReference>
<dbReference type="GlyGen" id="Q06466">
    <property type="glycosylation" value="3 sites"/>
</dbReference>
<dbReference type="PaxDb" id="4932-YPR157W"/>
<dbReference type="EnsemblFungi" id="YPR157W_mRNA">
    <property type="protein sequence ID" value="YPR157W"/>
    <property type="gene ID" value="YPR157W"/>
</dbReference>
<dbReference type="GeneID" id="856280"/>
<dbReference type="KEGG" id="sce:YPR157W"/>
<dbReference type="AGR" id="SGD:S000006361"/>
<dbReference type="SGD" id="S000006361">
    <property type="gene designation" value="TDA6"/>
</dbReference>
<dbReference type="VEuPathDB" id="FungiDB:YPR157W"/>
<dbReference type="eggNOG" id="ENOG502RJPB">
    <property type="taxonomic scope" value="Eukaryota"/>
</dbReference>
<dbReference type="GeneTree" id="ENSGT00940000176347"/>
<dbReference type="HOGENOM" id="CLU_024079_2_0_1"/>
<dbReference type="InParanoid" id="Q06466"/>
<dbReference type="OMA" id="LMEFFTN"/>
<dbReference type="OrthoDB" id="188042at2759"/>
<dbReference type="BioCyc" id="YEAST:G3O-34288-MONOMER"/>
<dbReference type="BioGRID-ORCS" id="856280">
    <property type="hits" value="3 hits in 10 CRISPR screens"/>
</dbReference>
<dbReference type="PRO" id="PR:Q06466"/>
<dbReference type="Proteomes" id="UP000002311">
    <property type="component" value="Chromosome XVI"/>
</dbReference>
<dbReference type="RNAct" id="Q06466">
    <property type="molecule type" value="protein"/>
</dbReference>
<dbReference type="GO" id="GO:0071944">
    <property type="term" value="C:cell periphery"/>
    <property type="evidence" value="ECO:0007005"/>
    <property type="project" value="SGD"/>
</dbReference>
<dbReference type="GO" id="GO:0000324">
    <property type="term" value="C:fungal-type vacuole"/>
    <property type="evidence" value="ECO:0007005"/>
    <property type="project" value="SGD"/>
</dbReference>
<dbReference type="GO" id="GO:0016020">
    <property type="term" value="C:membrane"/>
    <property type="evidence" value="ECO:0007669"/>
    <property type="project" value="UniProtKB-SubCell"/>
</dbReference>
<dbReference type="GO" id="GO:0015031">
    <property type="term" value="P:protein transport"/>
    <property type="evidence" value="ECO:0007669"/>
    <property type="project" value="UniProtKB-KW"/>
</dbReference>
<dbReference type="InterPro" id="IPR053102">
    <property type="entry name" value="VPS_Associated"/>
</dbReference>
<dbReference type="PANTHER" id="PTHR48220">
    <property type="match status" value="1"/>
</dbReference>
<dbReference type="PANTHER" id="PTHR48220:SF1">
    <property type="entry name" value="VACUOLAR PROTEIN SORTING-ASSOCIATED PROTEIN 62-RELATED"/>
    <property type="match status" value="1"/>
</dbReference>
<name>TDA6_YEAST</name>
<organism>
    <name type="scientific">Saccharomyces cerevisiae (strain ATCC 204508 / S288c)</name>
    <name type="common">Baker's yeast</name>
    <dbReference type="NCBI Taxonomy" id="559292"/>
    <lineage>
        <taxon>Eukaryota</taxon>
        <taxon>Fungi</taxon>
        <taxon>Dikarya</taxon>
        <taxon>Ascomycota</taxon>
        <taxon>Saccharomycotina</taxon>
        <taxon>Saccharomycetes</taxon>
        <taxon>Saccharomycetales</taxon>
        <taxon>Saccharomycetaceae</taxon>
        <taxon>Saccharomyces</taxon>
    </lineage>
</organism>
<accession>Q06466</accession>
<accession>D6W4F3</accession>
<sequence>MHCVLARILLWFLIVDLSVIRALVLPPLKDYDPLEPLMKRDMAMGQRNRFKVDGQLPPILNSTDVTDDQRSLHTPGEIPSYVINHCPLVHLYSEEKYWPSDIAEYVQNFQIKDKNGNSISTHENLTLHDLKAEYHVDLFGNKTETHIPSSEVFLTSLDDFDKDPKWLLGHLPEYGTGYNSKAPAILIVVDKGNGWVDAFWFFFYPFNHGPFIMGHGPWGNHVGDWEHSLVRFYKGIPKYLWMSAHSSGTGYRYEAVEKFKKLRKRKQQDSDDGGDTILERPLIFSARGTHANYASAGQHAHDIPFFFMPLSDFTDRGPLWDPSLNFYSYTFDGKTVTPSSEREESLGLDWLHFQGGWGDQQLPARDPRQKWCVAQWKYIGGPRGPLFKKLDRLNLCGGVKKWNFWNGGCPARRLIKKAEGLDSESTDLMGDNCGVLLYRIRPKWLRGILRFLMWRGILCSLMEFFTN</sequence>
<proteinExistence type="evidence at transcript level"/>
<protein>
    <recommendedName>
        <fullName>Putative vacuolar protein sorting-associated protein TDA6</fullName>
    </recommendedName>
    <alternativeName>
        <fullName>Topoisomerase I damage affected protein 6</fullName>
    </alternativeName>
</protein>
<keyword id="KW-0325">Glycoprotein</keyword>
<keyword id="KW-0472">Membrane</keyword>
<keyword id="KW-0653">Protein transport</keyword>
<keyword id="KW-1185">Reference proteome</keyword>
<keyword id="KW-0812">Transmembrane</keyword>
<keyword id="KW-1133">Transmembrane helix</keyword>
<keyword id="KW-0813">Transport</keyword>
<comment type="function">
    <text evidence="1">Involved in vacuolar protein sorting.</text>
</comment>
<comment type="subcellular location">
    <subcellularLocation>
        <location>Membrane</location>
        <topology>Single-pass membrane protein</topology>
    </subcellularLocation>
</comment>
<comment type="induction">
    <text evidence="3">By 8-methoxypsoralen and UVA.</text>
</comment>
<comment type="disruption phenotype">
    <text evidence="4">Leads to cell death when overexpressing the camptothecin mimetic TOP1-T(722)A mutant.</text>
</comment>
<comment type="similarity">
    <text evidence="5">Belongs to the VPS62 family.</text>
</comment>
<feature type="chain" id="PRO_0000259482" description="Putative vacuolar protein sorting-associated protein TDA6">
    <location>
        <begin position="1"/>
        <end position="467"/>
    </location>
</feature>
<feature type="transmembrane region" description="Helical" evidence="2">
    <location>
        <begin position="8"/>
        <end position="28"/>
    </location>
</feature>
<feature type="glycosylation site" description="N-linked (GlcNAc...) asparagine" evidence="2">
    <location>
        <position position="61"/>
    </location>
</feature>
<feature type="glycosylation site" description="N-linked (GlcNAc...) asparagine" evidence="2">
    <location>
        <position position="124"/>
    </location>
</feature>
<feature type="glycosylation site" description="N-linked (GlcNAc...) asparagine" evidence="2">
    <location>
        <position position="141"/>
    </location>
</feature>